<sequence>MEFAHLTVLSLFCLAFVGITATSSGEDYWQSIWPNTPLPKTFSDLSIPSGKTNSLPIKSEELKQYSTLFFEHDLHPRKNFILGNTNSVGSIIRPFTKSRQGVTDSIWLANKEKQSLEDFCYSPTAIAEHKHCVSSLKSMIDQVISHFGSTKIKAISSNFAPYQDQYVVEDVKKVGDNAVMCHRLNFEKVVFNCHQVRDTTAYVVSLVASDGTKTKALTVCHHDTRGMNPELLYEALEVTLGTVPVCHFIGNKAAAWVPNHTADNLCVM</sequence>
<dbReference type="EMBL" id="X13242">
    <property type="protein sequence ID" value="CAA31626.1"/>
    <property type="molecule type" value="mRNA"/>
</dbReference>
<dbReference type="PIR" id="S03328">
    <property type="entry name" value="S03328"/>
</dbReference>
<dbReference type="SMR" id="P09059"/>
<dbReference type="InterPro" id="IPR044816">
    <property type="entry name" value="BURP"/>
</dbReference>
<dbReference type="InterPro" id="IPR004873">
    <property type="entry name" value="BURP_dom"/>
</dbReference>
<dbReference type="PANTHER" id="PTHR31236:SF35">
    <property type="entry name" value="ABUNDANT PROTEIN, PUTATIVE-RELATED"/>
    <property type="match status" value="1"/>
</dbReference>
<dbReference type="PANTHER" id="PTHR31236">
    <property type="entry name" value="BURP DOMAIN PROTEIN USPL1-LIKE"/>
    <property type="match status" value="1"/>
</dbReference>
<dbReference type="Pfam" id="PF03181">
    <property type="entry name" value="BURP"/>
    <property type="match status" value="1"/>
</dbReference>
<dbReference type="SMART" id="SM01045">
    <property type="entry name" value="BURP"/>
    <property type="match status" value="1"/>
</dbReference>
<dbReference type="PROSITE" id="PS51277">
    <property type="entry name" value="BURP"/>
    <property type="match status" value="1"/>
</dbReference>
<proteinExistence type="evidence at transcript level"/>
<organism>
    <name type="scientific">Vicia faba</name>
    <name type="common">Broad bean</name>
    <name type="synonym">Faba vulgaris</name>
    <dbReference type="NCBI Taxonomy" id="3906"/>
    <lineage>
        <taxon>Eukaryota</taxon>
        <taxon>Viridiplantae</taxon>
        <taxon>Streptophyta</taxon>
        <taxon>Embryophyta</taxon>
        <taxon>Tracheophyta</taxon>
        <taxon>Spermatophyta</taxon>
        <taxon>Magnoliopsida</taxon>
        <taxon>eudicotyledons</taxon>
        <taxon>Gunneridae</taxon>
        <taxon>Pentapetalae</taxon>
        <taxon>rosids</taxon>
        <taxon>fabids</taxon>
        <taxon>Fabales</taxon>
        <taxon>Fabaceae</taxon>
        <taxon>Papilionoideae</taxon>
        <taxon>50 kb inversion clade</taxon>
        <taxon>NPAAA clade</taxon>
        <taxon>Hologalegina</taxon>
        <taxon>IRL clade</taxon>
        <taxon>Fabeae</taxon>
        <taxon>Vicia</taxon>
    </lineage>
</organism>
<accession>P09059</accession>
<feature type="signal peptide">
    <location>
        <begin position="1"/>
        <end position="22"/>
    </location>
</feature>
<feature type="chain" id="PRO_0000022441" description="Unknown seed protein 30.1">
    <location>
        <begin position="23"/>
        <end position="268"/>
    </location>
</feature>
<feature type="domain" description="BURP" evidence="1">
    <location>
        <begin position="68"/>
        <end position="259"/>
    </location>
</feature>
<protein>
    <recommendedName>
        <fullName>Unknown seed protein 30.1</fullName>
    </recommendedName>
    <alternativeName>
        <fullName>VF30.1</fullName>
    </alternativeName>
</protein>
<evidence type="ECO:0000255" key="1">
    <source>
        <dbReference type="PROSITE-ProRule" id="PRU00604"/>
    </source>
</evidence>
<keyword id="KW-0732">Signal</keyword>
<reference key="1">
    <citation type="journal article" date="1988" name="Plant Mol. Biol.">
        <title>Abundant embryonic mRNA in field bean (Vicia faba L.) codes for a new class of seed proteins: cDNA cloning and characterization of the primary translation product.</title>
        <authorList>
            <person name="Bassuener R."/>
            <person name="Baeumlein H."/>
            <person name="Huth A."/>
            <person name="Jung R."/>
            <person name="Wobus U."/>
            <person name="Rapoport T.A."/>
            <person name="Saalbach G."/>
            <person name="Muentz K."/>
        </authorList>
        <dbReference type="AGRICOLA" id="IND92000056"/>
    </citation>
    <scope>NUCLEOTIDE SEQUENCE [MRNA]</scope>
    <source>
        <strain>cv. Fribo</strain>
        <tissue>Seed</tissue>
    </source>
</reference>
<name>SVF30_VICFA</name>